<organism>
    <name type="scientific">Dictyostelium discoideum</name>
    <name type="common">Social amoeba</name>
    <dbReference type="NCBI Taxonomy" id="44689"/>
    <lineage>
        <taxon>Eukaryota</taxon>
        <taxon>Amoebozoa</taxon>
        <taxon>Evosea</taxon>
        <taxon>Eumycetozoa</taxon>
        <taxon>Dictyostelia</taxon>
        <taxon>Dictyosteliales</taxon>
        <taxon>Dictyosteliaceae</taxon>
        <taxon>Dictyostelium</taxon>
    </lineage>
</organism>
<feature type="chain" id="PRO_0000330936" description="Geranylgeranyl transferase type-1 subunit beta">
    <location>
        <begin position="1"/>
        <end position="352"/>
    </location>
</feature>
<feature type="repeat" description="PFTB 1">
    <location>
        <begin position="135"/>
        <end position="180"/>
    </location>
</feature>
<feature type="repeat" description="PFTB 2">
    <location>
        <begin position="187"/>
        <end position="228"/>
    </location>
</feature>
<feature type="repeat" description="PFTB 3">
    <location>
        <begin position="236"/>
        <end position="276"/>
    </location>
</feature>
<feature type="repeat" description="PFTB 4">
    <location>
        <begin position="283"/>
        <end position="325"/>
    </location>
</feature>
<feature type="binding site" evidence="3">
    <location>
        <begin position="213"/>
        <end position="215"/>
    </location>
    <ligand>
        <name>geranylgeranyl diphosphate</name>
        <dbReference type="ChEBI" id="CHEBI:57533"/>
    </ligand>
</feature>
<feature type="binding site" evidence="3">
    <location>
        <begin position="255"/>
        <end position="258"/>
    </location>
    <ligand>
        <name>geranylgeranyl diphosphate</name>
        <dbReference type="ChEBI" id="CHEBI:57533"/>
    </ligand>
</feature>
<feature type="binding site" evidence="3">
    <location>
        <position position="261"/>
    </location>
    <ligand>
        <name>Zn(2+)</name>
        <dbReference type="ChEBI" id="CHEBI:29105"/>
        <note>catalytic</note>
    </ligand>
</feature>
<feature type="binding site" evidence="3">
    <location>
        <position position="263"/>
    </location>
    <ligand>
        <name>Zn(2+)</name>
        <dbReference type="ChEBI" id="CHEBI:29105"/>
        <note>catalytic</note>
    </ligand>
</feature>
<feature type="binding site" evidence="3">
    <location>
        <begin position="264"/>
        <end position="267"/>
    </location>
    <ligand>
        <name>geranylgeranyl diphosphate</name>
        <dbReference type="ChEBI" id="CHEBI:57533"/>
    </ligand>
</feature>
<feature type="binding site" evidence="3">
    <location>
        <position position="313"/>
    </location>
    <ligand>
        <name>Zn(2+)</name>
        <dbReference type="ChEBI" id="CHEBI:29105"/>
        <note>catalytic</note>
    </ligand>
</feature>
<gene>
    <name type="primary">pggt1b</name>
    <name type="ORF">DDB_G0269726</name>
</gene>
<evidence type="ECO:0000250" key="1"/>
<evidence type="ECO:0000250" key="2">
    <source>
        <dbReference type="UniProtKB" id="P18898"/>
    </source>
</evidence>
<evidence type="ECO:0000250" key="3">
    <source>
        <dbReference type="UniProtKB" id="P53610"/>
    </source>
</evidence>
<evidence type="ECO:0000305" key="4"/>
<sequence>MGSCINEEKLAKFFQRSLNALPAPYTSGLPNHLSLIFFVVSGLDLLNKTDILEKEKQDIINWVYSRQILPSKDNPEINLENCGFRGYNFLGQEFCCDKSVHTSENGPLEYDLPSTPNTYCALLILRILGDDFSGVNKKAIIDSLRKRQRESDGAISGSPNVGDYDLRHLFSACAISFILDDWSAINKESAIDYIKSCLSYEFAFGQTPQQEAHGGPTYCAIASLSLLGRLDVLEPFKEQLTFWLVKKQITGFCGRTNKDPDTCYAFWIGASLMMIDRYDLIDFASINAFIGSAQHEAIGGVAKEPGQLPDVMHSYLSLVGLSFGNIPSIQQVIPCLNLSKRAAGKDWFEKLI</sequence>
<dbReference type="EC" id="2.5.1.59"/>
<dbReference type="EMBL" id="AAFI02000005">
    <property type="protein sequence ID" value="EAL72213.1"/>
    <property type="molecule type" value="Genomic_DNA"/>
</dbReference>
<dbReference type="RefSeq" id="XP_646228.1">
    <property type="nucleotide sequence ID" value="XM_641136.1"/>
</dbReference>
<dbReference type="SMR" id="Q55DA3"/>
<dbReference type="FunCoup" id="Q55DA3">
    <property type="interactions" value="112"/>
</dbReference>
<dbReference type="STRING" id="44689.Q55DA3"/>
<dbReference type="EnsemblProtists" id="EAL72213">
    <property type="protein sequence ID" value="EAL72213"/>
    <property type="gene ID" value="DDB_G0269726"/>
</dbReference>
<dbReference type="GeneID" id="8617182"/>
<dbReference type="KEGG" id="ddi:DDB_G0269726"/>
<dbReference type="dictyBase" id="DDB_G0269726">
    <property type="gene designation" value="pggt1b"/>
</dbReference>
<dbReference type="VEuPathDB" id="AmoebaDB:DDB_G0269726"/>
<dbReference type="InParanoid" id="Q55DA3"/>
<dbReference type="OMA" id="RWCLMRQ"/>
<dbReference type="PhylomeDB" id="Q55DA3"/>
<dbReference type="PRO" id="PR:Q55DA3"/>
<dbReference type="Proteomes" id="UP000002195">
    <property type="component" value="Chromosome 1"/>
</dbReference>
<dbReference type="GO" id="GO:0005953">
    <property type="term" value="C:CAAX-protein geranylgeranyltransferase complex"/>
    <property type="evidence" value="ECO:0000250"/>
    <property type="project" value="UniProtKB"/>
</dbReference>
<dbReference type="GO" id="GO:0004662">
    <property type="term" value="F:CAAX-protein geranylgeranyltransferase activity"/>
    <property type="evidence" value="ECO:0000250"/>
    <property type="project" value="UniProtKB"/>
</dbReference>
<dbReference type="GO" id="GO:0004661">
    <property type="term" value="F:protein geranylgeranyltransferase activity"/>
    <property type="evidence" value="ECO:0000250"/>
    <property type="project" value="UniProtKB"/>
</dbReference>
<dbReference type="GO" id="GO:0008270">
    <property type="term" value="F:zinc ion binding"/>
    <property type="evidence" value="ECO:0000250"/>
    <property type="project" value="UniProtKB"/>
</dbReference>
<dbReference type="GO" id="GO:0018344">
    <property type="term" value="P:protein geranylgeranylation"/>
    <property type="evidence" value="ECO:0000250"/>
    <property type="project" value="UniProtKB"/>
</dbReference>
<dbReference type="CDD" id="cd02895">
    <property type="entry name" value="GGTase-I"/>
    <property type="match status" value="1"/>
</dbReference>
<dbReference type="FunFam" id="1.50.10.20:FF:000040">
    <property type="entry name" value="Terpenoid cyclases/protein prenyltransferase alpha-alpha toroid"/>
    <property type="match status" value="1"/>
</dbReference>
<dbReference type="Gene3D" id="1.50.10.20">
    <property type="match status" value="1"/>
</dbReference>
<dbReference type="InterPro" id="IPR041960">
    <property type="entry name" value="GGTase_I_beta"/>
</dbReference>
<dbReference type="InterPro" id="IPR045089">
    <property type="entry name" value="PGGT1B-like"/>
</dbReference>
<dbReference type="InterPro" id="IPR001330">
    <property type="entry name" value="Prenyltrans"/>
</dbReference>
<dbReference type="InterPro" id="IPR008930">
    <property type="entry name" value="Terpenoid_cyclase/PrenylTrfase"/>
</dbReference>
<dbReference type="PANTHER" id="PTHR11774">
    <property type="entry name" value="GERANYLGERANYL TRANSFERASE TYPE BETA SUBUNIT"/>
    <property type="match status" value="1"/>
</dbReference>
<dbReference type="PANTHER" id="PTHR11774:SF4">
    <property type="entry name" value="GERANYLGERANYL TRANSFERASE TYPE-1 SUBUNIT BETA"/>
    <property type="match status" value="1"/>
</dbReference>
<dbReference type="Pfam" id="PF00432">
    <property type="entry name" value="Prenyltrans"/>
    <property type="match status" value="1"/>
</dbReference>
<dbReference type="SUPFAM" id="SSF48239">
    <property type="entry name" value="Terpenoid cyclases/Protein prenyltransferases"/>
    <property type="match status" value="1"/>
</dbReference>
<accession>Q55DA3</accession>
<comment type="function">
    <text evidence="1">Catalyzes the transfer of a geranyl-geranyl moiety from geranyl-geranyl pyrophosphate to a cysteine at the fourth position from the C-terminus of proteins having the C-terminal sequence Cys-aliphatic-aliphatic-X.</text>
</comment>
<comment type="catalytic activity">
    <reaction>
        <text>geranylgeranyl diphosphate + L-cysteinyl-[protein] = S-geranylgeranyl-L-cysteinyl-[protein] + diphosphate</text>
        <dbReference type="Rhea" id="RHEA:21240"/>
        <dbReference type="Rhea" id="RHEA-COMP:10131"/>
        <dbReference type="Rhea" id="RHEA-COMP:11537"/>
        <dbReference type="ChEBI" id="CHEBI:29950"/>
        <dbReference type="ChEBI" id="CHEBI:33019"/>
        <dbReference type="ChEBI" id="CHEBI:57533"/>
        <dbReference type="ChEBI" id="CHEBI:86021"/>
        <dbReference type="EC" id="2.5.1.59"/>
    </reaction>
</comment>
<comment type="cofactor">
    <cofactor evidence="3">
        <name>Zn(2+)</name>
        <dbReference type="ChEBI" id="CHEBI:29105"/>
    </cofactor>
    <text evidence="3">Binds 1 zinc ion per subunit.</text>
</comment>
<comment type="cofactor">
    <cofactor evidence="2">
        <name>Mg(2+)</name>
        <dbReference type="ChEBI" id="CHEBI:18420"/>
    </cofactor>
</comment>
<comment type="subunit">
    <text evidence="1">Heterodimer of an alpha and a beta subunit.</text>
</comment>
<comment type="similarity">
    <text evidence="4">Belongs to the protein prenyltransferase subunit beta family.</text>
</comment>
<reference key="1">
    <citation type="journal article" date="2005" name="Nature">
        <title>The genome of the social amoeba Dictyostelium discoideum.</title>
        <authorList>
            <person name="Eichinger L."/>
            <person name="Pachebat J.A."/>
            <person name="Gloeckner G."/>
            <person name="Rajandream M.A."/>
            <person name="Sucgang R."/>
            <person name="Berriman M."/>
            <person name="Song J."/>
            <person name="Olsen R."/>
            <person name="Szafranski K."/>
            <person name="Xu Q."/>
            <person name="Tunggal B."/>
            <person name="Kummerfeld S."/>
            <person name="Madera M."/>
            <person name="Konfortov B.A."/>
            <person name="Rivero F."/>
            <person name="Bankier A.T."/>
            <person name="Lehmann R."/>
            <person name="Hamlin N."/>
            <person name="Davies R."/>
            <person name="Gaudet P."/>
            <person name="Fey P."/>
            <person name="Pilcher K."/>
            <person name="Chen G."/>
            <person name="Saunders D."/>
            <person name="Sodergren E.J."/>
            <person name="Davis P."/>
            <person name="Kerhornou A."/>
            <person name="Nie X."/>
            <person name="Hall N."/>
            <person name="Anjard C."/>
            <person name="Hemphill L."/>
            <person name="Bason N."/>
            <person name="Farbrother P."/>
            <person name="Desany B."/>
            <person name="Just E."/>
            <person name="Morio T."/>
            <person name="Rost R."/>
            <person name="Churcher C.M."/>
            <person name="Cooper J."/>
            <person name="Haydock S."/>
            <person name="van Driessche N."/>
            <person name="Cronin A."/>
            <person name="Goodhead I."/>
            <person name="Muzny D.M."/>
            <person name="Mourier T."/>
            <person name="Pain A."/>
            <person name="Lu M."/>
            <person name="Harper D."/>
            <person name="Lindsay R."/>
            <person name="Hauser H."/>
            <person name="James K.D."/>
            <person name="Quiles M."/>
            <person name="Madan Babu M."/>
            <person name="Saito T."/>
            <person name="Buchrieser C."/>
            <person name="Wardroper A."/>
            <person name="Felder M."/>
            <person name="Thangavelu M."/>
            <person name="Johnson D."/>
            <person name="Knights A."/>
            <person name="Loulseged H."/>
            <person name="Mungall K.L."/>
            <person name="Oliver K."/>
            <person name="Price C."/>
            <person name="Quail M.A."/>
            <person name="Urushihara H."/>
            <person name="Hernandez J."/>
            <person name="Rabbinowitsch E."/>
            <person name="Steffen D."/>
            <person name="Sanders M."/>
            <person name="Ma J."/>
            <person name="Kohara Y."/>
            <person name="Sharp S."/>
            <person name="Simmonds M.N."/>
            <person name="Spiegler S."/>
            <person name="Tivey A."/>
            <person name="Sugano S."/>
            <person name="White B."/>
            <person name="Walker D."/>
            <person name="Woodward J.R."/>
            <person name="Winckler T."/>
            <person name="Tanaka Y."/>
            <person name="Shaulsky G."/>
            <person name="Schleicher M."/>
            <person name="Weinstock G.M."/>
            <person name="Rosenthal A."/>
            <person name="Cox E.C."/>
            <person name="Chisholm R.L."/>
            <person name="Gibbs R.A."/>
            <person name="Loomis W.F."/>
            <person name="Platzer M."/>
            <person name="Kay R.R."/>
            <person name="Williams J.G."/>
            <person name="Dear P.H."/>
            <person name="Noegel A.A."/>
            <person name="Barrell B.G."/>
            <person name="Kuspa A."/>
        </authorList>
    </citation>
    <scope>NUCLEOTIDE SEQUENCE [LARGE SCALE GENOMIC DNA]</scope>
    <source>
        <strain>AX4</strain>
    </source>
</reference>
<name>PGTB1_DICDI</name>
<protein>
    <recommendedName>
        <fullName>Geranylgeranyl transferase type-1 subunit beta</fullName>
        <ecNumber>2.5.1.59</ecNumber>
    </recommendedName>
    <alternativeName>
        <fullName>Geranylgeranyl transferase type I subunit beta</fullName>
        <shortName>GGTase-I-beta</shortName>
    </alternativeName>
    <alternativeName>
        <fullName>Type I protein geranyl-geranyltransferase subunit beta</fullName>
    </alternativeName>
</protein>
<keyword id="KW-0460">Magnesium</keyword>
<keyword id="KW-0479">Metal-binding</keyword>
<keyword id="KW-0637">Prenyltransferase</keyword>
<keyword id="KW-1185">Reference proteome</keyword>
<keyword id="KW-0677">Repeat</keyword>
<keyword id="KW-0808">Transferase</keyword>
<keyword id="KW-0862">Zinc</keyword>
<proteinExistence type="evidence at transcript level"/>